<accession>C3K0T6</accession>
<protein>
    <recommendedName>
        <fullName>Putative 4-hydroxy-4-methyl-2-oxoglutarate aldolase</fullName>
        <shortName>HMG aldolase</shortName>
        <ecNumber>4.1.3.17</ecNumber>
    </recommendedName>
    <alternativeName>
        <fullName>Oxaloacetate decarboxylase</fullName>
        <shortName>OAA decarboxylase</shortName>
        <ecNumber>4.1.1.112</ecNumber>
    </alternativeName>
    <alternativeName>
        <fullName>Regulator of ribonuclease activity homolog</fullName>
    </alternativeName>
    <alternativeName>
        <fullName>RraA-like protein</fullName>
    </alternativeName>
</protein>
<reference key="1">
    <citation type="journal article" date="2009" name="Genome Biol.">
        <title>Genomic and genetic analyses of diversity and plant interactions of Pseudomonas fluorescens.</title>
        <authorList>
            <person name="Silby M.W."/>
            <person name="Cerdeno-Tarraga A.M."/>
            <person name="Vernikos G.S."/>
            <person name="Giddens S.R."/>
            <person name="Jackson R.W."/>
            <person name="Preston G.M."/>
            <person name="Zhang X.-X."/>
            <person name="Moon C.D."/>
            <person name="Gehrig S.M."/>
            <person name="Godfrey S.A.C."/>
            <person name="Knight C.G."/>
            <person name="Malone J.G."/>
            <person name="Robinson Z."/>
            <person name="Spiers A.J."/>
            <person name="Harris S."/>
            <person name="Challis G.L."/>
            <person name="Yaxley A.M."/>
            <person name="Harris D."/>
            <person name="Seeger K."/>
            <person name="Murphy L."/>
            <person name="Rutter S."/>
            <person name="Squares R."/>
            <person name="Quail M.A."/>
            <person name="Saunders E."/>
            <person name="Mavromatis K."/>
            <person name="Brettin T.S."/>
            <person name="Bentley S.D."/>
            <person name="Hothersall J."/>
            <person name="Stephens E."/>
            <person name="Thomas C.M."/>
            <person name="Parkhill J."/>
            <person name="Levy S.B."/>
            <person name="Rainey P.B."/>
            <person name="Thomson N.R."/>
        </authorList>
    </citation>
    <scope>NUCLEOTIDE SEQUENCE [LARGE SCALE GENOMIC DNA]</scope>
    <source>
        <strain>SBW25</strain>
    </source>
</reference>
<feature type="chain" id="PRO_1000206352" description="Putative 4-hydroxy-4-methyl-2-oxoglutarate aldolase">
    <location>
        <begin position="1"/>
        <end position="163"/>
    </location>
</feature>
<feature type="binding site" evidence="1">
    <location>
        <begin position="76"/>
        <end position="79"/>
    </location>
    <ligand>
        <name>substrate</name>
    </ligand>
</feature>
<feature type="binding site" evidence="1">
    <location>
        <position position="98"/>
    </location>
    <ligand>
        <name>substrate</name>
    </ligand>
</feature>
<feature type="binding site" evidence="1">
    <location>
        <position position="99"/>
    </location>
    <ligand>
        <name>a divalent metal cation</name>
        <dbReference type="ChEBI" id="CHEBI:60240"/>
    </ligand>
</feature>
<sequence length="163" mass="17490">MNHYVTPDLCDAYPDLVQVLEPMFSNFGGRDSFGGEIVTLKCFEDNSLVKEQADQPGAGKVLVVDGGGSLRRALLGDMIAEKAAKNGWEGLVIYGCIRDVDVIAQTDLGVQALASHPMKTDKRGIGDLNVVVTFAGVTFRPGEYIYADNNGVIVSPSPLKMPE</sequence>
<organism>
    <name type="scientific">Pseudomonas fluorescens (strain SBW25)</name>
    <dbReference type="NCBI Taxonomy" id="216595"/>
    <lineage>
        <taxon>Bacteria</taxon>
        <taxon>Pseudomonadati</taxon>
        <taxon>Pseudomonadota</taxon>
        <taxon>Gammaproteobacteria</taxon>
        <taxon>Pseudomonadales</taxon>
        <taxon>Pseudomonadaceae</taxon>
        <taxon>Pseudomonas</taxon>
    </lineage>
</organism>
<evidence type="ECO:0000250" key="1"/>
<evidence type="ECO:0000305" key="2"/>
<keyword id="KW-0456">Lyase</keyword>
<keyword id="KW-0479">Metal-binding</keyword>
<name>RRAAH_PSEFS</name>
<comment type="function">
    <text evidence="1">Catalyzes the aldol cleavage of 4-hydroxy-4-methyl-2-oxoglutarate (HMG) into 2 molecules of pyruvate. Also contains a secondary oxaloacetate (OAA) decarboxylase activity due to the common pyruvate enolate transition state formed following C-C bond cleavage in the retro-aldol and decarboxylation reactions (By similarity).</text>
</comment>
<comment type="catalytic activity">
    <reaction>
        <text>4-hydroxy-4-methyl-2-oxoglutarate = 2 pyruvate</text>
        <dbReference type="Rhea" id="RHEA:22748"/>
        <dbReference type="ChEBI" id="CHEBI:15361"/>
        <dbReference type="ChEBI" id="CHEBI:58276"/>
        <dbReference type="EC" id="4.1.3.17"/>
    </reaction>
</comment>
<comment type="catalytic activity">
    <reaction>
        <text>oxaloacetate + H(+) = pyruvate + CO2</text>
        <dbReference type="Rhea" id="RHEA:15641"/>
        <dbReference type="ChEBI" id="CHEBI:15361"/>
        <dbReference type="ChEBI" id="CHEBI:15378"/>
        <dbReference type="ChEBI" id="CHEBI:16452"/>
        <dbReference type="ChEBI" id="CHEBI:16526"/>
        <dbReference type="EC" id="4.1.1.112"/>
    </reaction>
</comment>
<comment type="cofactor">
    <cofactor evidence="1">
        <name>a divalent metal cation</name>
        <dbReference type="ChEBI" id="CHEBI:60240"/>
    </cofactor>
    <text evidence="1">Divalent metal cation.</text>
</comment>
<comment type="subunit">
    <text evidence="1">Homotrimer.</text>
</comment>
<comment type="similarity">
    <text evidence="2">Belongs to the class II aldolase/RraA-like family.</text>
</comment>
<proteinExistence type="inferred from homology"/>
<dbReference type="EC" id="4.1.3.17"/>
<dbReference type="EC" id="4.1.1.112"/>
<dbReference type="EMBL" id="AM181176">
    <property type="protein sequence ID" value="CAY51373.1"/>
    <property type="molecule type" value="Genomic_DNA"/>
</dbReference>
<dbReference type="SMR" id="C3K0T6"/>
<dbReference type="STRING" id="294.SRM1_01861"/>
<dbReference type="eggNOG" id="COG0684">
    <property type="taxonomic scope" value="Bacteria"/>
</dbReference>
<dbReference type="HOGENOM" id="CLU_072626_4_0_6"/>
<dbReference type="OrthoDB" id="943692at2"/>
<dbReference type="GO" id="GO:0047443">
    <property type="term" value="F:4-hydroxy-4-methyl-2-oxoglutarate aldolase activity"/>
    <property type="evidence" value="ECO:0007669"/>
    <property type="project" value="UniProtKB-EC"/>
</dbReference>
<dbReference type="GO" id="GO:0046872">
    <property type="term" value="F:metal ion binding"/>
    <property type="evidence" value="ECO:0007669"/>
    <property type="project" value="UniProtKB-KW"/>
</dbReference>
<dbReference type="GO" id="GO:0008948">
    <property type="term" value="F:oxaloacetate decarboxylase activity"/>
    <property type="evidence" value="ECO:0007669"/>
    <property type="project" value="UniProtKB-EC"/>
</dbReference>
<dbReference type="GO" id="GO:0008428">
    <property type="term" value="F:ribonuclease inhibitor activity"/>
    <property type="evidence" value="ECO:0007669"/>
    <property type="project" value="InterPro"/>
</dbReference>
<dbReference type="GO" id="GO:0051252">
    <property type="term" value="P:regulation of RNA metabolic process"/>
    <property type="evidence" value="ECO:0007669"/>
    <property type="project" value="InterPro"/>
</dbReference>
<dbReference type="CDD" id="cd16841">
    <property type="entry name" value="RraA_family"/>
    <property type="match status" value="1"/>
</dbReference>
<dbReference type="Gene3D" id="3.50.30.40">
    <property type="entry name" value="Ribonuclease E inhibitor RraA/RraA-like"/>
    <property type="match status" value="1"/>
</dbReference>
<dbReference type="InterPro" id="IPR010203">
    <property type="entry name" value="RraA"/>
</dbReference>
<dbReference type="InterPro" id="IPR005493">
    <property type="entry name" value="RraA/RraA-like"/>
</dbReference>
<dbReference type="InterPro" id="IPR036704">
    <property type="entry name" value="RraA/RraA-like_sf"/>
</dbReference>
<dbReference type="NCBIfam" id="TIGR01935">
    <property type="entry name" value="NOT-MenG"/>
    <property type="match status" value="1"/>
</dbReference>
<dbReference type="NCBIfam" id="NF006875">
    <property type="entry name" value="PRK09372.1"/>
    <property type="match status" value="1"/>
</dbReference>
<dbReference type="NCBIfam" id="NF009134">
    <property type="entry name" value="PRK12487.1"/>
    <property type="match status" value="1"/>
</dbReference>
<dbReference type="PANTHER" id="PTHR33254">
    <property type="entry name" value="4-HYDROXY-4-METHYL-2-OXOGLUTARATE ALDOLASE 3-RELATED"/>
    <property type="match status" value="1"/>
</dbReference>
<dbReference type="PANTHER" id="PTHR33254:SF29">
    <property type="entry name" value="REGULATOR OF RIBONUCLEASE ACTIVITY A"/>
    <property type="match status" value="1"/>
</dbReference>
<dbReference type="Pfam" id="PF03737">
    <property type="entry name" value="RraA-like"/>
    <property type="match status" value="1"/>
</dbReference>
<dbReference type="SUPFAM" id="SSF89562">
    <property type="entry name" value="RraA-like"/>
    <property type="match status" value="1"/>
</dbReference>
<gene>
    <name type="ordered locus">PFLU_4617</name>
</gene>